<feature type="chain" id="PRO_0000104095" description="Putative DNA processing protein DprA">
    <location>
        <begin position="1"/>
        <end position="389"/>
    </location>
</feature>
<comment type="function">
    <text evidence="1">May help load RecA onto ssDNA (By similarity).</text>
</comment>
<comment type="induction">
    <text evidence="2">Induced when cells are grown in human macrophages (THP-1 macrophage cell line) (PubMed:22375954).</text>
</comment>
<comment type="similarity">
    <text evidence="3">Belongs to the DprA/Smf family.</text>
</comment>
<evidence type="ECO:0000250" key="1">
    <source>
        <dbReference type="UniProtKB" id="Q8DPI7"/>
    </source>
</evidence>
<evidence type="ECO:0000269" key="2">
    <source>
    </source>
</evidence>
<evidence type="ECO:0000305" key="3"/>
<keyword id="KW-1185">Reference proteome</keyword>
<organism>
    <name type="scientific">Mycobacterium tuberculosis (strain ATCC 25618 / H37Rv)</name>
    <dbReference type="NCBI Taxonomy" id="83332"/>
    <lineage>
        <taxon>Bacteria</taxon>
        <taxon>Bacillati</taxon>
        <taxon>Actinomycetota</taxon>
        <taxon>Actinomycetes</taxon>
        <taxon>Mycobacteriales</taxon>
        <taxon>Mycobacteriaceae</taxon>
        <taxon>Mycobacterium</taxon>
        <taxon>Mycobacterium tuberculosis complex</taxon>
    </lineage>
</organism>
<dbReference type="EMBL" id="AL123456">
    <property type="protein sequence ID" value="CCP45698.1"/>
    <property type="molecule type" value="Genomic_DNA"/>
</dbReference>
<dbReference type="PIR" id="C70926">
    <property type="entry name" value="C70926"/>
</dbReference>
<dbReference type="RefSeq" id="NP_217412.2">
    <property type="nucleotide sequence ID" value="NC_000962.3"/>
</dbReference>
<dbReference type="RefSeq" id="WP_003414694.1">
    <property type="nucleotide sequence ID" value="NZ_NVQJ01000006.1"/>
</dbReference>
<dbReference type="SMR" id="P9WL29"/>
<dbReference type="STRING" id="83332.Rv2896c"/>
<dbReference type="PaxDb" id="83332-Rv2896c"/>
<dbReference type="GeneID" id="887177"/>
<dbReference type="KEGG" id="mtu:Rv2896c"/>
<dbReference type="KEGG" id="mtv:RVBD_2896c"/>
<dbReference type="TubercuList" id="Rv2896c"/>
<dbReference type="eggNOG" id="COG0758">
    <property type="taxonomic scope" value="Bacteria"/>
</dbReference>
<dbReference type="eggNOG" id="COG1378">
    <property type="taxonomic scope" value="Bacteria"/>
</dbReference>
<dbReference type="InParanoid" id="P9WL29"/>
<dbReference type="OrthoDB" id="9785707at2"/>
<dbReference type="Proteomes" id="UP000001584">
    <property type="component" value="Chromosome"/>
</dbReference>
<dbReference type="GO" id="GO:0009294">
    <property type="term" value="P:DNA-mediated transformation"/>
    <property type="evidence" value="ECO:0007669"/>
    <property type="project" value="InterPro"/>
</dbReference>
<dbReference type="Gene3D" id="3.40.50.450">
    <property type="match status" value="1"/>
</dbReference>
<dbReference type="Gene3D" id="1.10.10.10">
    <property type="entry name" value="Winged helix-like DNA-binding domain superfamily/Winged helix DNA-binding domain"/>
    <property type="match status" value="1"/>
</dbReference>
<dbReference type="InterPro" id="IPR003488">
    <property type="entry name" value="DprA"/>
</dbReference>
<dbReference type="InterPro" id="IPR041614">
    <property type="entry name" value="DprA_WH"/>
</dbReference>
<dbReference type="InterPro" id="IPR036388">
    <property type="entry name" value="WH-like_DNA-bd_sf"/>
</dbReference>
<dbReference type="NCBIfam" id="TIGR00732">
    <property type="entry name" value="dprA"/>
    <property type="match status" value="1"/>
</dbReference>
<dbReference type="PANTHER" id="PTHR43022">
    <property type="entry name" value="PROTEIN SMF"/>
    <property type="match status" value="1"/>
</dbReference>
<dbReference type="PANTHER" id="PTHR43022:SF1">
    <property type="entry name" value="PROTEIN SMF"/>
    <property type="match status" value="1"/>
</dbReference>
<dbReference type="Pfam" id="PF02481">
    <property type="entry name" value="DNA_processg_A"/>
    <property type="match status" value="1"/>
</dbReference>
<dbReference type="Pfam" id="PF17782">
    <property type="entry name" value="DprA_WH"/>
    <property type="match status" value="1"/>
</dbReference>
<dbReference type="SUPFAM" id="SSF102405">
    <property type="entry name" value="MCP/YpsA-like"/>
    <property type="match status" value="1"/>
</dbReference>
<sequence length="389" mass="40100">MIDPTARAWAYLSRVAEPPCAQLAALVRCVGPVEAADRVRRGQVGNELAQHTGARREIDRAADDLELLMRRGGRLITPDDDEWPVLAFAAFSGAGARARPCGHSPLVLWALGPARLDEVAPRAAAVVGTRAATAYGEHVAADLAAGLAERDVAVVSGGAYGIDGAAHRAALDSEGITVAVLAGGFDIPYPAGHSALLHRIAQHGVLFTEYPPGVRPARHRFLTRNRLVAAVARAAVVVEAGLRSGAANTAAWARALGRVVAAVPGPVTSSASAGCHTLLRHGAELVTRADDIVEFVGHIGELAGDEPRPGAALDVLSEAERQVYEALPGRGAATIDEIAVGSGLLPAQVLGPLAILEVAGLAECRDGRWRILRAGAGQAAAKGAAARLV</sequence>
<gene>
    <name evidence="3" type="primary">dprA</name>
    <name type="ordered locus">Rv2896c</name>
    <name type="ORF">MTCY274.27c</name>
</gene>
<name>DPRA_MYCTU</name>
<accession>P9WL29</accession>
<accession>L0TDP5</accession>
<accession>Q10817</accession>
<reference key="1">
    <citation type="journal article" date="1998" name="Nature">
        <title>Deciphering the biology of Mycobacterium tuberculosis from the complete genome sequence.</title>
        <authorList>
            <person name="Cole S.T."/>
            <person name="Brosch R."/>
            <person name="Parkhill J."/>
            <person name="Garnier T."/>
            <person name="Churcher C.M."/>
            <person name="Harris D.E."/>
            <person name="Gordon S.V."/>
            <person name="Eiglmeier K."/>
            <person name="Gas S."/>
            <person name="Barry C.E. III"/>
            <person name="Tekaia F."/>
            <person name="Badcock K."/>
            <person name="Basham D."/>
            <person name="Brown D."/>
            <person name="Chillingworth T."/>
            <person name="Connor R."/>
            <person name="Davies R.M."/>
            <person name="Devlin K."/>
            <person name="Feltwell T."/>
            <person name="Gentles S."/>
            <person name="Hamlin N."/>
            <person name="Holroyd S."/>
            <person name="Hornsby T."/>
            <person name="Jagels K."/>
            <person name="Krogh A."/>
            <person name="McLean J."/>
            <person name="Moule S."/>
            <person name="Murphy L.D."/>
            <person name="Oliver S."/>
            <person name="Osborne J."/>
            <person name="Quail M.A."/>
            <person name="Rajandream M.A."/>
            <person name="Rogers J."/>
            <person name="Rutter S."/>
            <person name="Seeger K."/>
            <person name="Skelton S."/>
            <person name="Squares S."/>
            <person name="Squares R."/>
            <person name="Sulston J.E."/>
            <person name="Taylor K."/>
            <person name="Whitehead S."/>
            <person name="Barrell B.G."/>
        </authorList>
    </citation>
    <scope>NUCLEOTIDE SEQUENCE [LARGE SCALE GENOMIC DNA]</scope>
    <source>
        <strain>ATCC 25618 / H37Rv</strain>
    </source>
</reference>
<reference key="2">
    <citation type="journal article" date="2012" name="Proteome Sci.">
        <title>Analysis of intracellular expressed proteins of Mycobacterium tuberculosis clinical isolates.</title>
        <authorList>
            <person name="Singhal N."/>
            <person name="Sharma P."/>
            <person name="Kumar M."/>
            <person name="Joshi B."/>
            <person name="Bisht D."/>
        </authorList>
    </citation>
    <scope>IDENTIFICATION BY MASS SPECTROMETRY</scope>
    <scope>INDUCTION</scope>
</reference>
<proteinExistence type="evidence at protein level"/>
<protein>
    <recommendedName>
        <fullName>Putative DNA processing protein DprA</fullName>
    </recommendedName>
</protein>